<proteinExistence type="evidence at protein level"/>
<sequence length="280" mass="31942">MLSYRHSFHAGNHADVLKHTVQSLIIESLKEKDKPFLYLDTHAGAGRYQLGSEHAERTGEYLEGIARIWQQDDLPAELEAYINVVKHFNRSGQLRYYPGSPLIARLLLREQDSLQLTELHPSDYPLLRSEFQKDSRARVEKADGFQQLKAKLPPVSRRGLILIDPPYEMKTDYQAVVSGIAEGYKRFATGIYALWYPVVLRQQIKRMIHDLEATGIRKILQIELAVLPDSDRRGMTASGMIVINPPWKLEQQMNNVLPWLHSKLVPAGTGHATVSWIVPE</sequence>
<feature type="chain" id="PRO_0000169567" description="Ribosomal RNA large subunit methyltransferase J">
    <location>
        <begin position="1"/>
        <end position="280"/>
    </location>
</feature>
<feature type="active site" description="Proton acceptor" evidence="9">
    <location>
        <position position="164"/>
    </location>
</feature>
<feature type="binding site" evidence="9">
    <location>
        <position position="19"/>
    </location>
    <ligand>
        <name>S-adenosyl-L-methionine</name>
        <dbReference type="ChEBI" id="CHEBI:59789"/>
    </ligand>
</feature>
<feature type="binding site" evidence="9">
    <location>
        <position position="42"/>
    </location>
    <ligand>
        <name>S-adenosyl-L-methionine</name>
        <dbReference type="ChEBI" id="CHEBI:59789"/>
    </ligand>
</feature>
<feature type="binding site" evidence="9">
    <location>
        <position position="100"/>
    </location>
    <ligand>
        <name>S-adenosyl-L-methionine</name>
        <dbReference type="ChEBI" id="CHEBI:59789"/>
    </ligand>
</feature>
<feature type="binding site" evidence="9">
    <location>
        <position position="118"/>
    </location>
    <ligand>
        <name>S-adenosyl-L-methionine</name>
        <dbReference type="ChEBI" id="CHEBI:59789"/>
    </ligand>
</feature>
<feature type="binding site" evidence="9">
    <location>
        <begin position="143"/>
        <end position="144"/>
    </location>
    <ligand>
        <name>S-adenosyl-L-methionine</name>
        <dbReference type="ChEBI" id="CHEBI:59789"/>
    </ligand>
</feature>
<feature type="binding site" evidence="9">
    <location>
        <position position="164"/>
    </location>
    <ligand>
        <name>S-adenosyl-L-methionine</name>
        <dbReference type="ChEBI" id="CHEBI:59789"/>
    </ligand>
</feature>
<feature type="site" description="Interaction with substrate rRNA" evidence="7">
    <location>
        <position position="4"/>
    </location>
</feature>
<feature type="mutagenesis site" description="Loss of catalytic activity." evidence="5">
    <original>Y</original>
    <variation>A</variation>
    <location>
        <position position="4"/>
    </location>
</feature>
<feature type="mutagenesis site" description="40-fold reduction in catalytic activity." evidence="5">
    <original>Y</original>
    <variation>F</variation>
    <location>
        <position position="4"/>
    </location>
</feature>
<feature type="mutagenesis site" description="Loss of catalytic activity." evidence="5">
    <original>H</original>
    <variation>D</variation>
    <location>
        <position position="6"/>
    </location>
</feature>
<feature type="mutagenesis site" description="Loss of catalytic activity." evidence="5">
    <original>K</original>
    <variation>A</variation>
    <location>
        <position position="18"/>
    </location>
</feature>
<feature type="mutagenesis site" description="10-fold reduction in catalytic activity." evidence="5">
    <original>K</original>
    <variation>R</variation>
    <location>
        <position position="18"/>
    </location>
</feature>
<feature type="mutagenesis site" description="Loss of catalytic activity." evidence="5">
    <original>D</original>
    <variation>A</variation>
    <location>
        <position position="164"/>
    </location>
</feature>
<feature type="turn" evidence="13">
    <location>
        <begin position="8"/>
        <end position="11"/>
    </location>
</feature>
<feature type="helix" evidence="12">
    <location>
        <begin position="13"/>
        <end position="29"/>
    </location>
</feature>
<feature type="strand" evidence="12">
    <location>
        <begin position="32"/>
        <end position="34"/>
    </location>
</feature>
<feature type="strand" evidence="12">
    <location>
        <begin position="37"/>
        <end position="42"/>
    </location>
</feature>
<feature type="strand" evidence="12">
    <location>
        <begin position="45"/>
        <end position="49"/>
    </location>
</feature>
<feature type="strand" evidence="10">
    <location>
        <begin position="53"/>
        <end position="56"/>
    </location>
</feature>
<feature type="helix" evidence="12">
    <location>
        <begin position="60"/>
        <end position="62"/>
    </location>
</feature>
<feature type="helix" evidence="12">
    <location>
        <begin position="65"/>
        <end position="67"/>
    </location>
</feature>
<feature type="turn" evidence="12">
    <location>
        <begin position="68"/>
        <end position="70"/>
    </location>
</feature>
<feature type="helix" evidence="12">
    <location>
        <begin position="76"/>
        <end position="78"/>
    </location>
</feature>
<feature type="helix" evidence="12">
    <location>
        <begin position="79"/>
        <end position="87"/>
    </location>
</feature>
<feature type="turn" evidence="11">
    <location>
        <begin position="88"/>
        <end position="91"/>
    </location>
</feature>
<feature type="strand" evidence="12">
    <location>
        <begin position="96"/>
        <end position="98"/>
    </location>
</feature>
<feature type="helix" evidence="12">
    <location>
        <begin position="100"/>
        <end position="107"/>
    </location>
</feature>
<feature type="strand" evidence="12">
    <location>
        <begin position="113"/>
        <end position="117"/>
    </location>
</feature>
<feature type="helix" evidence="12">
    <location>
        <begin position="123"/>
        <end position="130"/>
    </location>
</feature>
<feature type="turn" evidence="12">
    <location>
        <begin position="131"/>
        <end position="133"/>
    </location>
</feature>
<feature type="strand" evidence="12">
    <location>
        <begin position="137"/>
        <end position="140"/>
    </location>
</feature>
<feature type="helix" evidence="12">
    <location>
        <begin position="144"/>
        <end position="150"/>
    </location>
</feature>
<feature type="strand" evidence="12">
    <location>
        <begin position="159"/>
        <end position="163"/>
    </location>
</feature>
<feature type="helix" evidence="12">
    <location>
        <begin position="172"/>
        <end position="186"/>
    </location>
</feature>
<feature type="strand" evidence="12">
    <location>
        <begin position="190"/>
        <end position="200"/>
    </location>
</feature>
<feature type="helix" evidence="12">
    <location>
        <begin position="201"/>
        <end position="213"/>
    </location>
</feature>
<feature type="strand" evidence="12">
    <location>
        <begin position="219"/>
        <end position="227"/>
    </location>
</feature>
<feature type="strand" evidence="12">
    <location>
        <begin position="231"/>
        <end position="234"/>
    </location>
</feature>
<feature type="strand" evidence="12">
    <location>
        <begin position="237"/>
        <end position="244"/>
    </location>
</feature>
<feature type="helix" evidence="12">
    <location>
        <begin position="249"/>
        <end position="264"/>
    </location>
</feature>
<feature type="strand" evidence="12">
    <location>
        <begin position="270"/>
        <end position="278"/>
    </location>
</feature>
<reference key="1">
    <citation type="journal article" date="1994" name="Nucleic Acids Res.">
        <title>Analysis of the Escherichia coli genome. V. DNA sequence of the region from 76.0 to 81.5 minutes.</title>
        <authorList>
            <person name="Sofia H.J."/>
            <person name="Burland V."/>
            <person name="Daniels D.L."/>
            <person name="Plunkett G. III"/>
            <person name="Blattner F.R."/>
        </authorList>
    </citation>
    <scope>NUCLEOTIDE SEQUENCE [LARGE SCALE GENOMIC DNA]</scope>
    <source>
        <strain>K12 / MG1655 / ATCC 47076</strain>
    </source>
</reference>
<reference key="2">
    <citation type="journal article" date="1997" name="Science">
        <title>The complete genome sequence of Escherichia coli K-12.</title>
        <authorList>
            <person name="Blattner F.R."/>
            <person name="Plunkett G. III"/>
            <person name="Bloch C.A."/>
            <person name="Perna N.T."/>
            <person name="Burland V."/>
            <person name="Riley M."/>
            <person name="Collado-Vides J."/>
            <person name="Glasner J.D."/>
            <person name="Rode C.K."/>
            <person name="Mayhew G.F."/>
            <person name="Gregor J."/>
            <person name="Davis N.W."/>
            <person name="Kirkpatrick H.A."/>
            <person name="Goeden M.A."/>
            <person name="Rose D.J."/>
            <person name="Mau B."/>
            <person name="Shao Y."/>
        </authorList>
    </citation>
    <scope>NUCLEOTIDE SEQUENCE [LARGE SCALE GENOMIC DNA]</scope>
    <source>
        <strain>K12 / MG1655 / ATCC 47076</strain>
    </source>
</reference>
<reference key="3">
    <citation type="journal article" date="2006" name="Mol. Syst. Biol.">
        <title>Highly accurate genome sequences of Escherichia coli K-12 strains MG1655 and W3110.</title>
        <authorList>
            <person name="Hayashi K."/>
            <person name="Morooka N."/>
            <person name="Yamamoto Y."/>
            <person name="Fujita K."/>
            <person name="Isono K."/>
            <person name="Choi S."/>
            <person name="Ohtsubo E."/>
            <person name="Baba T."/>
            <person name="Wanner B.L."/>
            <person name="Mori H."/>
            <person name="Horiuchi T."/>
        </authorList>
    </citation>
    <scope>NUCLEOTIDE SEQUENCE [LARGE SCALE GENOMIC DNA]</scope>
    <source>
        <strain>K12 / W3110 / ATCC 27325 / DSM 5911</strain>
    </source>
</reference>
<reference key="4">
    <citation type="journal article" date="2006" name="J. Bacteriol.">
        <title>Escherichia coli competence gene homologs are essential for competitive fitness and the use of DNA as a nutrient.</title>
        <authorList>
            <person name="Palchevskiy V."/>
            <person name="Finkel S.E."/>
        </authorList>
    </citation>
    <scope>FUNCTION</scope>
    <scope>DISRUPTION PHENOTYPE</scope>
    <source>
        <strain>K12 / W3110 / ZK126</strain>
    </source>
</reference>
<reference key="5">
    <citation type="journal article" date="2001" name="J. Bacteriol.">
        <title>DNA as a nutrient: novel role for bacterial competence gene homologs.</title>
        <authorList>
            <person name="Finkel S.E."/>
            <person name="Kolter R."/>
        </authorList>
    </citation>
    <scope>FUNCTION</scope>
    <scope>DISRUPTION PHENOTYPE</scope>
    <source>
        <strain>K12 / W3110 / ZK126</strain>
    </source>
</reference>
<reference key="6">
    <citation type="journal article" date="2012" name="RNA">
        <title>The last rRNA methyltransferase of E. coli revealed: the yhiR gene encodes adenine-N6 methyltransferase specific for modification of A2030 of 23S ribosomal RNA.</title>
        <authorList>
            <person name="Golovina A.Y."/>
            <person name="Dzama M.M."/>
            <person name="Osterman I.A."/>
            <person name="Sergiev P.V."/>
            <person name="Serebryakova M.V."/>
            <person name="Bogdanov A.A."/>
            <person name="Dontsova O.A."/>
        </authorList>
    </citation>
    <scope>FUNCTION</scope>
    <scope>CATALYTIC ACTIVITY</scope>
    <scope>GENE NAME</scope>
    <scope>DISRUPTION PHENOTYPE</scope>
    <source>
        <strain>K12</strain>
    </source>
</reference>
<reference key="7">
    <citation type="journal article" date="2013" name="Acta Crystallogr. F">
        <title>Purification, crystallization and preliminary X-ray diffraction analysis of the 23S rRNA methyltransferase RlmJ from Escherichia coli.</title>
        <authorList>
            <person name="Punekar A.S."/>
            <person name="Selmer M."/>
        </authorList>
    </citation>
    <scope>CRYSTALLIZATION</scope>
    <scope>SUBUNIT</scope>
    <source>
        <strain>K12 / MG1655 / ATCC 47076</strain>
    </source>
</reference>
<reference key="8">
    <citation type="journal article" date="2013" name="Nucleic Acids Res.">
        <title>Structural and functional insights into the molecular mechanism of rRNA m6A methyltransferase RlmJ.</title>
        <authorList>
            <person name="Punekar A.S."/>
            <person name="Liljeruhm J."/>
            <person name="Shepherd T.R."/>
            <person name="Forster A.C."/>
            <person name="Selmer M."/>
        </authorList>
    </citation>
    <scope>X-RAY CRYSTALLOGRAPHY (1.85 ANGSTROMS) OF APOENZYME AND IN COMPLEXES WITH S-ADENOSYL-L-HOMOCYSTEINE AND SUBSTRATE ANALOG</scope>
    <scope>FUNCTION</scope>
    <scope>CATALYTIC ACTIVITY</scope>
    <scope>SUBSTRATE SPECIFICITY</scope>
    <scope>ACTIVE SITE</scope>
    <scope>MUTAGENESIS OF TYR-4; HIS-6; LYS-18 AND ASP-164</scope>
    <source>
        <strain>K12 / MG1655 / ATCC 47076</strain>
    </source>
</reference>
<keyword id="KW-0002">3D-structure</keyword>
<keyword id="KW-0489">Methyltransferase</keyword>
<keyword id="KW-1185">Reference proteome</keyword>
<keyword id="KW-0694">RNA-binding</keyword>
<keyword id="KW-0698">rRNA processing</keyword>
<keyword id="KW-0949">S-adenosyl-L-methionine</keyword>
<keyword id="KW-0808">Transferase</keyword>
<comment type="function">
    <text evidence="1 2 3 4 5">Specifically methylates the adenine in position 2030 of 23S rRNA. Nascent 23S rRNA seems to be the natural substrate. Appears to be not necessary for ribosome assembly. Required for the utilization of extracellular DNA as the sole source of carbon and energy (PubMed:11591672, PubMed:16707682).</text>
</comment>
<comment type="catalytic activity">
    <reaction evidence="1 4 5">
        <text>adenosine(2030) in 23S rRNA + S-adenosyl-L-methionine = N(6)-methyladenosine(2030) in 23S rRNA + S-adenosyl-L-homocysteine + H(+)</text>
        <dbReference type="Rhea" id="RHEA:43736"/>
        <dbReference type="Rhea" id="RHEA-COMP:10668"/>
        <dbReference type="Rhea" id="RHEA-COMP:10669"/>
        <dbReference type="ChEBI" id="CHEBI:15378"/>
        <dbReference type="ChEBI" id="CHEBI:57856"/>
        <dbReference type="ChEBI" id="CHEBI:59789"/>
        <dbReference type="ChEBI" id="CHEBI:74411"/>
        <dbReference type="ChEBI" id="CHEBI:74449"/>
        <dbReference type="EC" id="2.1.1.266"/>
    </reaction>
</comment>
<comment type="subunit">
    <text evidence="1 6">Monomer.</text>
</comment>
<comment type="interaction">
    <interactant intactId="EBI-548165">
        <id>P37634</id>
    </interactant>
    <interactant intactId="EBI-552497">
        <id>P0A8H6</id>
        <label>yihI</label>
    </interactant>
    <organismsDiffer>false</organismsDiffer>
    <experiments>2</experiments>
</comment>
<comment type="disruption phenotype">
    <text evidence="2 3 4">The inactivation of the this gene results in the complete loss of A2030 modification, but does not cause the accumulation of ribosome assembly intermediates. The phenotype of rlmJ knockout gene is very mild under various growth conditions and at the stationary phase, except for a small growth advantage in anaerobic conditions. Only minor changes in the total E.coli proteome can be observed in a cell devoid of the 23S rRNA nucleotide A2030 methylation (PubMed:22847818). Mutants show a stationary-phase competition defect during coculture with wild-type cells (PubMed:11591672). Cells lacking this gene are unable to grow using DNA as a sole nutrition source, but have no defects in DNA uptake by electroporation or when made chemically competent (PubMed:11591672, PubMed:16707682).</text>
</comment>
<comment type="miscellaneous">
    <text evidence="8 9">Recombinant protein prefers protein-free 23S rRNA to ribonucleoprotein particles containing only part of the 50S subunit proteins and does not methylate the assembled 50S subunit (PubMed:22847818). Recognizes a minimal substrate corresponding to helix 72; this shows that RlmJ requires only a small hairpin for activity and this suggests that RlmJ can methylate A2030 before the 23S RNA is completely transcribed, processed and folded (PubMed:23945937). Cannot modify single-stranded DNA having the same sequence as H72 (PubMed:23945937).</text>
</comment>
<comment type="similarity">
    <text evidence="1">Belongs to the RlmJ family.</text>
</comment>
<name>RLMJ_ECOLI</name>
<evidence type="ECO:0000255" key="1">
    <source>
        <dbReference type="HAMAP-Rule" id="MF_00934"/>
    </source>
</evidence>
<evidence type="ECO:0000269" key="2">
    <source>
    </source>
</evidence>
<evidence type="ECO:0000269" key="3">
    <source>
    </source>
</evidence>
<evidence type="ECO:0000269" key="4">
    <source>
    </source>
</evidence>
<evidence type="ECO:0000269" key="5">
    <source>
    </source>
</evidence>
<evidence type="ECO:0000269" key="6">
    <source>
    </source>
</evidence>
<evidence type="ECO:0000305" key="7"/>
<evidence type="ECO:0000305" key="8">
    <source>
    </source>
</evidence>
<evidence type="ECO:0000305" key="9">
    <source>
    </source>
</evidence>
<evidence type="ECO:0007829" key="10">
    <source>
        <dbReference type="PDB" id="4BLU"/>
    </source>
</evidence>
<evidence type="ECO:0007829" key="11">
    <source>
        <dbReference type="PDB" id="4BLV"/>
    </source>
</evidence>
<evidence type="ECO:0007829" key="12">
    <source>
        <dbReference type="PDB" id="6QE0"/>
    </source>
</evidence>
<evidence type="ECO:0007829" key="13">
    <source>
        <dbReference type="PDB" id="7P9I"/>
    </source>
</evidence>
<accession>P37634</accession>
<accession>Q2M7G1</accession>
<protein>
    <recommendedName>
        <fullName evidence="1">Ribosomal RNA large subunit methyltransferase J</fullName>
        <ecNumber evidence="1">2.1.1.266</ecNumber>
    </recommendedName>
    <alternativeName>
        <fullName evidence="1">23S rRNA (adenine(2030)-N6)-methyltransferase</fullName>
    </alternativeName>
    <alternativeName>
        <fullName evidence="1">23S rRNA m6A2030 methyltransferase</fullName>
    </alternativeName>
</protein>
<gene>
    <name evidence="1" type="primary">rlmJ</name>
    <name type="synonym">yhiR</name>
    <name type="ordered locus">b3499</name>
    <name type="ordered locus">JW3466</name>
</gene>
<dbReference type="EC" id="2.1.1.266" evidence="1"/>
<dbReference type="EMBL" id="U00039">
    <property type="protein sequence ID" value="AAB18475.1"/>
    <property type="molecule type" value="Genomic_DNA"/>
</dbReference>
<dbReference type="EMBL" id="U00096">
    <property type="protein sequence ID" value="AAC76524.1"/>
    <property type="molecule type" value="Genomic_DNA"/>
</dbReference>
<dbReference type="EMBL" id="AP009048">
    <property type="protein sequence ID" value="BAE77795.1"/>
    <property type="molecule type" value="Genomic_DNA"/>
</dbReference>
<dbReference type="PIR" id="S47719">
    <property type="entry name" value="S47719"/>
</dbReference>
<dbReference type="RefSeq" id="NP_417956.1">
    <property type="nucleotide sequence ID" value="NC_000913.3"/>
</dbReference>
<dbReference type="RefSeq" id="WP_001300574.1">
    <property type="nucleotide sequence ID" value="NZ_SSZK01000042.1"/>
</dbReference>
<dbReference type="PDB" id="4BLU">
    <property type="method" value="X-ray"/>
    <property type="resolution" value="1.85 A"/>
    <property type="chains" value="A/B=1-280"/>
</dbReference>
<dbReference type="PDB" id="4BLV">
    <property type="method" value="X-ray"/>
    <property type="resolution" value="2.00 A"/>
    <property type="chains" value="A/B=1-280"/>
</dbReference>
<dbReference type="PDB" id="4BLW">
    <property type="method" value="X-ray"/>
    <property type="resolution" value="1.95 A"/>
    <property type="chains" value="A/B=1-280"/>
</dbReference>
<dbReference type="PDB" id="6QDX">
    <property type="method" value="X-ray"/>
    <property type="resolution" value="2.10 A"/>
    <property type="chains" value="A/B/C/D=1-280"/>
</dbReference>
<dbReference type="PDB" id="6QE0">
    <property type="method" value="X-ray"/>
    <property type="resolution" value="1.39 A"/>
    <property type="chains" value="A=1-280"/>
</dbReference>
<dbReference type="PDB" id="6QE5">
    <property type="method" value="X-ray"/>
    <property type="resolution" value="1.61 A"/>
    <property type="chains" value="A/B=1-280"/>
</dbReference>
<dbReference type="PDB" id="7P8Q">
    <property type="method" value="X-ray"/>
    <property type="resolution" value="2.29 A"/>
    <property type="chains" value="A=1-280"/>
</dbReference>
<dbReference type="PDB" id="7P9I">
    <property type="method" value="X-ray"/>
    <property type="resolution" value="1.59 A"/>
    <property type="chains" value="A/B=1-280"/>
</dbReference>
<dbReference type="PDB" id="7P9O">
    <property type="method" value="X-ray"/>
    <property type="resolution" value="2.10 A"/>
    <property type="chains" value="A=1-280"/>
</dbReference>
<dbReference type="PDBsum" id="4BLU"/>
<dbReference type="PDBsum" id="4BLV"/>
<dbReference type="PDBsum" id="4BLW"/>
<dbReference type="PDBsum" id="6QDX"/>
<dbReference type="PDBsum" id="6QE0"/>
<dbReference type="PDBsum" id="6QE5"/>
<dbReference type="PDBsum" id="7P8Q"/>
<dbReference type="PDBsum" id="7P9I"/>
<dbReference type="PDBsum" id="7P9O"/>
<dbReference type="SMR" id="P37634"/>
<dbReference type="BioGRID" id="4262505">
    <property type="interactions" value="30"/>
</dbReference>
<dbReference type="DIP" id="DIP-12371N"/>
<dbReference type="FunCoup" id="P37634">
    <property type="interactions" value="256"/>
</dbReference>
<dbReference type="IntAct" id="P37634">
    <property type="interactions" value="20"/>
</dbReference>
<dbReference type="STRING" id="511145.b3499"/>
<dbReference type="jPOST" id="P37634"/>
<dbReference type="PaxDb" id="511145-b3499"/>
<dbReference type="EnsemblBacteria" id="AAC76524">
    <property type="protein sequence ID" value="AAC76524"/>
    <property type="gene ID" value="b3499"/>
</dbReference>
<dbReference type="GeneID" id="948012"/>
<dbReference type="KEGG" id="ecj:JW3466"/>
<dbReference type="KEGG" id="eco:b3499"/>
<dbReference type="KEGG" id="ecoc:C3026_18950"/>
<dbReference type="PATRIC" id="fig|511145.12.peg.3601"/>
<dbReference type="EchoBASE" id="EB2146"/>
<dbReference type="eggNOG" id="COG2961">
    <property type="taxonomic scope" value="Bacteria"/>
</dbReference>
<dbReference type="HOGENOM" id="CLU_061769_0_0_6"/>
<dbReference type="InParanoid" id="P37634"/>
<dbReference type="OMA" id="TYAIWYP"/>
<dbReference type="OrthoDB" id="9791274at2"/>
<dbReference type="PhylomeDB" id="P37634"/>
<dbReference type="BioCyc" id="EcoCyc:EG12234-MONOMER"/>
<dbReference type="BioCyc" id="MetaCyc:EG12234-MONOMER"/>
<dbReference type="BRENDA" id="2.1.1.266">
    <property type="organism ID" value="2026"/>
</dbReference>
<dbReference type="EvolutionaryTrace" id="P37634"/>
<dbReference type="PRO" id="PR:P37634"/>
<dbReference type="Proteomes" id="UP000000625">
    <property type="component" value="Chromosome"/>
</dbReference>
<dbReference type="GO" id="GO:0005829">
    <property type="term" value="C:cytosol"/>
    <property type="evidence" value="ECO:0000314"/>
    <property type="project" value="EcoCyc"/>
</dbReference>
<dbReference type="GO" id="GO:0036307">
    <property type="term" value="F:23S rRNA (adenine(2030)-N(6))-methyltransferase activity"/>
    <property type="evidence" value="ECO:0000314"/>
    <property type="project" value="EcoCyc"/>
</dbReference>
<dbReference type="GO" id="GO:0003723">
    <property type="term" value="F:RNA binding"/>
    <property type="evidence" value="ECO:0007669"/>
    <property type="project" value="UniProtKB-UniRule"/>
</dbReference>
<dbReference type="GO" id="GO:0008988">
    <property type="term" value="F:rRNA (adenine-N6-)-methyltransferase activity"/>
    <property type="evidence" value="ECO:0000314"/>
    <property type="project" value="UniProtKB"/>
</dbReference>
<dbReference type="GO" id="GO:0015976">
    <property type="term" value="P:carbon utilization"/>
    <property type="evidence" value="ECO:0000315"/>
    <property type="project" value="EcoCyc"/>
</dbReference>
<dbReference type="GO" id="GO:0070475">
    <property type="term" value="P:rRNA base methylation"/>
    <property type="evidence" value="ECO:0000314"/>
    <property type="project" value="UniProtKB"/>
</dbReference>
<dbReference type="FunFam" id="3.40.50.150:FF:000037">
    <property type="entry name" value="Ribosomal RNA large subunit methyltransferase J"/>
    <property type="match status" value="1"/>
</dbReference>
<dbReference type="Gene3D" id="3.40.50.150">
    <property type="entry name" value="Vaccinia Virus protein VP39"/>
    <property type="match status" value="1"/>
</dbReference>
<dbReference type="HAMAP" id="MF_00934">
    <property type="entry name" value="23SrRNA_methyltr_J"/>
    <property type="match status" value="1"/>
</dbReference>
<dbReference type="InterPro" id="IPR002052">
    <property type="entry name" value="DNA_methylase_N6_adenine_CS"/>
</dbReference>
<dbReference type="InterPro" id="IPR007473">
    <property type="entry name" value="RlmJ"/>
</dbReference>
<dbReference type="InterPro" id="IPR029063">
    <property type="entry name" value="SAM-dependent_MTases_sf"/>
</dbReference>
<dbReference type="PANTHER" id="PTHR37426">
    <property type="entry name" value="RIBOSOMAL RNA LARGE SUBUNIT METHYLTRANSFERASE J"/>
    <property type="match status" value="1"/>
</dbReference>
<dbReference type="PANTHER" id="PTHR37426:SF1">
    <property type="entry name" value="RIBOSOMAL RNA LARGE SUBUNIT METHYLTRANSFERASE J"/>
    <property type="match status" value="1"/>
</dbReference>
<dbReference type="Pfam" id="PF04378">
    <property type="entry name" value="RsmJ"/>
    <property type="match status" value="1"/>
</dbReference>
<dbReference type="SUPFAM" id="SSF53335">
    <property type="entry name" value="S-adenosyl-L-methionine-dependent methyltransferases"/>
    <property type="match status" value="1"/>
</dbReference>
<dbReference type="PROSITE" id="PS00092">
    <property type="entry name" value="N6_MTASE"/>
    <property type="match status" value="2"/>
</dbReference>
<organism>
    <name type="scientific">Escherichia coli (strain K12)</name>
    <dbReference type="NCBI Taxonomy" id="83333"/>
    <lineage>
        <taxon>Bacteria</taxon>
        <taxon>Pseudomonadati</taxon>
        <taxon>Pseudomonadota</taxon>
        <taxon>Gammaproteobacteria</taxon>
        <taxon>Enterobacterales</taxon>
        <taxon>Enterobacteriaceae</taxon>
        <taxon>Escherichia</taxon>
    </lineage>
</organism>